<protein>
    <recommendedName>
        <fullName evidence="1">Arginine N-succinyltransferase</fullName>
        <shortName evidence="1">AST</shortName>
        <ecNumber evidence="1">2.3.1.109</ecNumber>
    </recommendedName>
    <alternativeName>
        <fullName evidence="1">AOST</fullName>
    </alternativeName>
</protein>
<proteinExistence type="inferred from homology"/>
<gene>
    <name evidence="1" type="primary">astA</name>
    <name type="ordered locus">plu3109</name>
</gene>
<evidence type="ECO:0000255" key="1">
    <source>
        <dbReference type="HAMAP-Rule" id="MF_01171"/>
    </source>
</evidence>
<comment type="function">
    <text evidence="1">Catalyzes the transfer of succinyl-CoA to arginine to produce N(2)-succinylarginine.</text>
</comment>
<comment type="catalytic activity">
    <reaction evidence="1">
        <text>succinyl-CoA + L-arginine = N(2)-succinyl-L-arginine + CoA + H(+)</text>
        <dbReference type="Rhea" id="RHEA:15185"/>
        <dbReference type="ChEBI" id="CHEBI:15378"/>
        <dbReference type="ChEBI" id="CHEBI:32682"/>
        <dbReference type="ChEBI" id="CHEBI:57287"/>
        <dbReference type="ChEBI" id="CHEBI:57292"/>
        <dbReference type="ChEBI" id="CHEBI:58241"/>
        <dbReference type="EC" id="2.3.1.109"/>
    </reaction>
</comment>
<comment type="pathway">
    <text evidence="1">Amino-acid degradation; L-arginine degradation via AST pathway; L-glutamate and succinate from L-arginine: step 1/5.</text>
</comment>
<comment type="similarity">
    <text evidence="1">Belongs to the arginine N-succinyltransferase family.</text>
</comment>
<organism>
    <name type="scientific">Photorhabdus laumondii subsp. laumondii (strain DSM 15139 / CIP 105565 / TT01)</name>
    <name type="common">Photorhabdus luminescens subsp. laumondii</name>
    <dbReference type="NCBI Taxonomy" id="243265"/>
    <lineage>
        <taxon>Bacteria</taxon>
        <taxon>Pseudomonadati</taxon>
        <taxon>Pseudomonadota</taxon>
        <taxon>Gammaproteobacteria</taxon>
        <taxon>Enterobacterales</taxon>
        <taxon>Morganellaceae</taxon>
        <taxon>Photorhabdus</taxon>
    </lineage>
</organism>
<name>ASTA_PHOLL</name>
<accession>Q7N2G8</accession>
<reference key="1">
    <citation type="journal article" date="2003" name="Nat. Biotechnol.">
        <title>The genome sequence of the entomopathogenic bacterium Photorhabdus luminescens.</title>
        <authorList>
            <person name="Duchaud E."/>
            <person name="Rusniok C."/>
            <person name="Frangeul L."/>
            <person name="Buchrieser C."/>
            <person name="Givaudan A."/>
            <person name="Taourit S."/>
            <person name="Bocs S."/>
            <person name="Boursaux-Eude C."/>
            <person name="Chandler M."/>
            <person name="Charles J.-F."/>
            <person name="Dassa E."/>
            <person name="Derose R."/>
            <person name="Derzelle S."/>
            <person name="Freyssinet G."/>
            <person name="Gaudriault S."/>
            <person name="Medigue C."/>
            <person name="Lanois A."/>
            <person name="Powell K."/>
            <person name="Siguier P."/>
            <person name="Vincent R."/>
            <person name="Wingate V."/>
            <person name="Zouine M."/>
            <person name="Glaser P."/>
            <person name="Boemare N."/>
            <person name="Danchin A."/>
            <person name="Kunst F."/>
        </authorList>
    </citation>
    <scope>NUCLEOTIDE SEQUENCE [LARGE SCALE GENOMIC DNA]</scope>
    <source>
        <strain>DSM 15139 / CIP 105565 / TT01</strain>
    </source>
</reference>
<sequence>MMLFRAVRHSDLNGVQSLSQRAGIGLTSFPNNLDQLRSRIARSVDTFDGKLARAQQGFLFVLEDTSANRVAGVSAIEVAVGLEEPFYNFRVQKTIRSSRELGIYKSIEALTLEQDQTGNSELCTLFLDPEYQKGRNGTFLSKARFLFIAAFRDIFSKTIFAEMRGVADEQGNSPFWNSLGQHFFGIPFSQADYLTGIGSKTFIAELMPLHPIYISLLSAEAQKVIGQVHEKTVPARAILEKEGLIYQGHIDIFDGGALLQAEIDRIRAVKESRLVSVSKAESVTRDDGVPCIVANQQFSEFRALLLNVVCDSNELFLTAAEMGALQVSDGDQVRLVSLFPKEN</sequence>
<keyword id="KW-0012">Acyltransferase</keyword>
<keyword id="KW-0056">Arginine metabolism</keyword>
<keyword id="KW-1185">Reference proteome</keyword>
<keyword id="KW-0808">Transferase</keyword>
<feature type="chain" id="PRO_0000262326" description="Arginine N-succinyltransferase">
    <location>
        <begin position="1"/>
        <end position="343"/>
    </location>
</feature>
<feature type="active site" description="Proton donor" evidence="1">
    <location>
        <position position="229"/>
    </location>
</feature>
<feature type="binding site" evidence="1">
    <location>
        <position position="125"/>
    </location>
    <ligand>
        <name>succinyl-CoA</name>
        <dbReference type="ChEBI" id="CHEBI:57292"/>
    </ligand>
</feature>
<dbReference type="EC" id="2.3.1.109" evidence="1"/>
<dbReference type="EMBL" id="BX571869">
    <property type="protein sequence ID" value="CAE15483.1"/>
    <property type="molecule type" value="Genomic_DNA"/>
</dbReference>
<dbReference type="SMR" id="Q7N2G8"/>
<dbReference type="STRING" id="243265.plu3109"/>
<dbReference type="KEGG" id="plu:plu3109"/>
<dbReference type="eggNOG" id="COG3138">
    <property type="taxonomic scope" value="Bacteria"/>
</dbReference>
<dbReference type="HOGENOM" id="CLU_057655_0_0_6"/>
<dbReference type="OrthoDB" id="21121at2"/>
<dbReference type="UniPathway" id="UPA00185">
    <property type="reaction ID" value="UER00279"/>
</dbReference>
<dbReference type="Proteomes" id="UP000002514">
    <property type="component" value="Chromosome"/>
</dbReference>
<dbReference type="GO" id="GO:0008791">
    <property type="term" value="F:arginine N-succinyltransferase activity"/>
    <property type="evidence" value="ECO:0007669"/>
    <property type="project" value="UniProtKB-UniRule"/>
</dbReference>
<dbReference type="GO" id="GO:0019544">
    <property type="term" value="P:arginine catabolic process to glutamate"/>
    <property type="evidence" value="ECO:0007669"/>
    <property type="project" value="UniProtKB-UniRule"/>
</dbReference>
<dbReference type="GO" id="GO:0019545">
    <property type="term" value="P:arginine catabolic process to succinate"/>
    <property type="evidence" value="ECO:0007669"/>
    <property type="project" value="UniProtKB-UniRule"/>
</dbReference>
<dbReference type="Gene3D" id="2.40.40.20">
    <property type="match status" value="1"/>
</dbReference>
<dbReference type="HAMAP" id="MF_01171">
    <property type="entry name" value="AstA"/>
    <property type="match status" value="1"/>
</dbReference>
<dbReference type="InterPro" id="IPR016181">
    <property type="entry name" value="Acyl_CoA_acyltransferase"/>
</dbReference>
<dbReference type="InterPro" id="IPR007041">
    <property type="entry name" value="Arg_succinylTrfase_AstA/AruG"/>
</dbReference>
<dbReference type="InterPro" id="IPR017650">
    <property type="entry name" value="Arginine_N-succinylTrfase"/>
</dbReference>
<dbReference type="NCBIfam" id="TIGR03243">
    <property type="entry name" value="arg_catab_AOST"/>
    <property type="match status" value="1"/>
</dbReference>
<dbReference type="NCBIfam" id="TIGR03244">
    <property type="entry name" value="arg_catab_AstA"/>
    <property type="match status" value="1"/>
</dbReference>
<dbReference type="PANTHER" id="PTHR30420:SF1">
    <property type="entry name" value="ARGININE N-SUCCINYLTRANSFERASE"/>
    <property type="match status" value="1"/>
</dbReference>
<dbReference type="PANTHER" id="PTHR30420">
    <property type="entry name" value="N-SUCCINYLARGININE DIHYDROLASE"/>
    <property type="match status" value="1"/>
</dbReference>
<dbReference type="Pfam" id="PF04958">
    <property type="entry name" value="AstA"/>
    <property type="match status" value="1"/>
</dbReference>
<dbReference type="SUPFAM" id="SSF55729">
    <property type="entry name" value="Acyl-CoA N-acyltransferases (Nat)"/>
    <property type="match status" value="1"/>
</dbReference>